<keyword id="KW-0963">Cytoplasm</keyword>
<keyword id="KW-0441">Lipid A biosynthesis</keyword>
<keyword id="KW-0444">Lipid biosynthesis</keyword>
<keyword id="KW-0443">Lipid metabolism</keyword>
<keyword id="KW-0456">Lyase</keyword>
<proteinExistence type="inferred from homology"/>
<organism>
    <name type="scientific">Staphylococcus aureus (strain Newman)</name>
    <dbReference type="NCBI Taxonomy" id="426430"/>
    <lineage>
        <taxon>Bacteria</taxon>
        <taxon>Bacillati</taxon>
        <taxon>Bacillota</taxon>
        <taxon>Bacilli</taxon>
        <taxon>Bacillales</taxon>
        <taxon>Staphylococcaceae</taxon>
        <taxon>Staphylococcus</taxon>
    </lineage>
</organism>
<reference key="1">
    <citation type="journal article" date="2008" name="J. Bacteriol.">
        <title>Genome sequence of Staphylococcus aureus strain Newman and comparative analysis of staphylococcal genomes: polymorphism and evolution of two major pathogenicity islands.</title>
        <authorList>
            <person name="Baba T."/>
            <person name="Bae T."/>
            <person name="Schneewind O."/>
            <person name="Takeuchi F."/>
            <person name="Hiramatsu K."/>
        </authorList>
    </citation>
    <scope>NUCLEOTIDE SEQUENCE [LARGE SCALE GENOMIC DNA]</scope>
    <source>
        <strain>Newman</strain>
    </source>
</reference>
<dbReference type="EC" id="4.2.1.59" evidence="1"/>
<dbReference type="EMBL" id="AP009351">
    <property type="protein sequence ID" value="BAF68275.1"/>
    <property type="molecule type" value="Genomic_DNA"/>
</dbReference>
<dbReference type="RefSeq" id="WP_000447678.1">
    <property type="nucleotide sequence ID" value="NZ_JBBIAE010000008.1"/>
</dbReference>
<dbReference type="SMR" id="A6QIU3"/>
<dbReference type="KEGG" id="sae:NWMN_2003"/>
<dbReference type="HOGENOM" id="CLU_078912_3_0_9"/>
<dbReference type="Proteomes" id="UP000006386">
    <property type="component" value="Chromosome"/>
</dbReference>
<dbReference type="GO" id="GO:0005737">
    <property type="term" value="C:cytoplasm"/>
    <property type="evidence" value="ECO:0007669"/>
    <property type="project" value="UniProtKB-SubCell"/>
</dbReference>
<dbReference type="GO" id="GO:0016020">
    <property type="term" value="C:membrane"/>
    <property type="evidence" value="ECO:0007669"/>
    <property type="project" value="GOC"/>
</dbReference>
<dbReference type="GO" id="GO:0019171">
    <property type="term" value="F:(3R)-hydroxyacyl-[acyl-carrier-protein] dehydratase activity"/>
    <property type="evidence" value="ECO:0007669"/>
    <property type="project" value="UniProtKB-EC"/>
</dbReference>
<dbReference type="GO" id="GO:0006633">
    <property type="term" value="P:fatty acid biosynthetic process"/>
    <property type="evidence" value="ECO:0007669"/>
    <property type="project" value="UniProtKB-UniRule"/>
</dbReference>
<dbReference type="GO" id="GO:0009245">
    <property type="term" value="P:lipid A biosynthetic process"/>
    <property type="evidence" value="ECO:0007669"/>
    <property type="project" value="UniProtKB-UniRule"/>
</dbReference>
<dbReference type="CDD" id="cd01288">
    <property type="entry name" value="FabZ"/>
    <property type="match status" value="1"/>
</dbReference>
<dbReference type="FunFam" id="3.10.129.10:FF:000001">
    <property type="entry name" value="3-hydroxyacyl-[acyl-carrier-protein] dehydratase FabZ"/>
    <property type="match status" value="1"/>
</dbReference>
<dbReference type="Gene3D" id="3.10.129.10">
    <property type="entry name" value="Hotdog Thioesterase"/>
    <property type="match status" value="1"/>
</dbReference>
<dbReference type="HAMAP" id="MF_00406">
    <property type="entry name" value="FabZ"/>
    <property type="match status" value="1"/>
</dbReference>
<dbReference type="InterPro" id="IPR013114">
    <property type="entry name" value="FabA_FabZ"/>
</dbReference>
<dbReference type="InterPro" id="IPR010084">
    <property type="entry name" value="FabZ"/>
</dbReference>
<dbReference type="InterPro" id="IPR029069">
    <property type="entry name" value="HotDog_dom_sf"/>
</dbReference>
<dbReference type="NCBIfam" id="TIGR01750">
    <property type="entry name" value="fabZ"/>
    <property type="match status" value="1"/>
</dbReference>
<dbReference type="NCBIfam" id="NF000582">
    <property type="entry name" value="PRK00006.1"/>
    <property type="match status" value="1"/>
</dbReference>
<dbReference type="PANTHER" id="PTHR30272">
    <property type="entry name" value="3-HYDROXYACYL-[ACYL-CARRIER-PROTEIN] DEHYDRATASE"/>
    <property type="match status" value="1"/>
</dbReference>
<dbReference type="PANTHER" id="PTHR30272:SF1">
    <property type="entry name" value="3-HYDROXYACYL-[ACYL-CARRIER-PROTEIN] DEHYDRATASE"/>
    <property type="match status" value="1"/>
</dbReference>
<dbReference type="Pfam" id="PF07977">
    <property type="entry name" value="FabA"/>
    <property type="match status" value="1"/>
</dbReference>
<dbReference type="SUPFAM" id="SSF54637">
    <property type="entry name" value="Thioesterase/thiol ester dehydrase-isomerase"/>
    <property type="match status" value="1"/>
</dbReference>
<name>FABZ_STAAE</name>
<comment type="function">
    <text evidence="1">Involved in unsaturated fatty acids biosynthesis. Catalyzes the dehydration of short chain beta-hydroxyacyl-ACPs and long chain saturated and unsaturated beta-hydroxyacyl-ACPs.</text>
</comment>
<comment type="catalytic activity">
    <reaction evidence="1">
        <text>a (3R)-hydroxyacyl-[ACP] = a (2E)-enoyl-[ACP] + H2O</text>
        <dbReference type="Rhea" id="RHEA:13097"/>
        <dbReference type="Rhea" id="RHEA-COMP:9925"/>
        <dbReference type="Rhea" id="RHEA-COMP:9945"/>
        <dbReference type="ChEBI" id="CHEBI:15377"/>
        <dbReference type="ChEBI" id="CHEBI:78784"/>
        <dbReference type="ChEBI" id="CHEBI:78827"/>
        <dbReference type="EC" id="4.2.1.59"/>
    </reaction>
</comment>
<comment type="subcellular location">
    <subcellularLocation>
        <location evidence="1">Cytoplasm</location>
    </subcellularLocation>
</comment>
<comment type="similarity">
    <text evidence="1">Belongs to the thioester dehydratase family. FabZ subfamily.</text>
</comment>
<gene>
    <name evidence="1" type="primary">fabZ</name>
    <name type="ordered locus">NWMN_2003</name>
</gene>
<feature type="chain" id="PRO_1000072269" description="3-hydroxyacyl-[acyl-carrier-protein] dehydratase FabZ">
    <location>
        <begin position="1"/>
        <end position="146"/>
    </location>
</feature>
<feature type="active site" evidence="1">
    <location>
        <position position="51"/>
    </location>
</feature>
<evidence type="ECO:0000255" key="1">
    <source>
        <dbReference type="HAMAP-Rule" id="MF_00406"/>
    </source>
</evidence>
<protein>
    <recommendedName>
        <fullName evidence="1">3-hydroxyacyl-[acyl-carrier-protein] dehydratase FabZ</fullName>
        <ecNumber evidence="1">4.2.1.59</ecNumber>
    </recommendedName>
    <alternativeName>
        <fullName evidence="1">(3R)-hydroxymyristoyl-[acyl-carrier-protein] dehydratase</fullName>
        <shortName evidence="1">(3R)-hydroxymyristoyl-ACP dehydrase</shortName>
    </alternativeName>
    <alternativeName>
        <fullName evidence="1">Beta-hydroxyacyl-ACP dehydratase</fullName>
    </alternativeName>
</protein>
<accession>A6QIU3</accession>
<sequence>METIFDYNQIKQIIPHRQPFLLIDKVVEYEEGQRCVAIKQVSGNEPFFQGHFPEYAVMPGVLITEALAQTGAVAILNSEENKGKIALFAGIDKCRFKRQVVPGDTLTLEVEITKIKGPIGKGNAKATVDGQLACSCELTFAIQDVK</sequence>